<protein>
    <recommendedName>
        <fullName evidence="1">Cysteine desulfurase</fullName>
        <ecNumber evidence="1">2.8.1.7</ecNumber>
    </recommendedName>
    <alternativeName>
        <fullName evidence="1">Selenocysteine beta-lyase</fullName>
        <shortName evidence="1">SCL</shortName>
    </alternativeName>
    <alternativeName>
        <fullName evidence="1">Selenocysteine lyase</fullName>
        <ecNumber evidence="1">4.4.1.16</ecNumber>
    </alternativeName>
    <alternativeName>
        <fullName evidence="1">Selenocysteine reductase</fullName>
    </alternativeName>
</protein>
<gene>
    <name evidence="1" type="primary">sufS</name>
    <name type="ordered locus">ECIAI1_1732</name>
</gene>
<dbReference type="EC" id="2.8.1.7" evidence="1"/>
<dbReference type="EC" id="4.4.1.16" evidence="1"/>
<dbReference type="EMBL" id="CU928160">
    <property type="protein sequence ID" value="CAQ98589.1"/>
    <property type="molecule type" value="Genomic_DNA"/>
</dbReference>
<dbReference type="RefSeq" id="WP_000144602.1">
    <property type="nucleotide sequence ID" value="NC_011741.1"/>
</dbReference>
<dbReference type="SMR" id="B7M0N5"/>
<dbReference type="KEGG" id="ecr:ECIAI1_1732"/>
<dbReference type="HOGENOM" id="CLU_003433_2_5_6"/>
<dbReference type="UniPathway" id="UPA00266"/>
<dbReference type="GO" id="GO:0005737">
    <property type="term" value="C:cytoplasm"/>
    <property type="evidence" value="ECO:0007669"/>
    <property type="project" value="UniProtKB-SubCell"/>
</dbReference>
<dbReference type="GO" id="GO:0031071">
    <property type="term" value="F:cysteine desulfurase activity"/>
    <property type="evidence" value="ECO:0007669"/>
    <property type="project" value="UniProtKB-UniRule"/>
</dbReference>
<dbReference type="GO" id="GO:0030170">
    <property type="term" value="F:pyridoxal phosphate binding"/>
    <property type="evidence" value="ECO:0007669"/>
    <property type="project" value="InterPro"/>
</dbReference>
<dbReference type="GO" id="GO:0009000">
    <property type="term" value="F:selenocysteine lyase activity"/>
    <property type="evidence" value="ECO:0007669"/>
    <property type="project" value="UniProtKB-UniRule"/>
</dbReference>
<dbReference type="GO" id="GO:0006534">
    <property type="term" value="P:cysteine metabolic process"/>
    <property type="evidence" value="ECO:0007669"/>
    <property type="project" value="InterPro"/>
</dbReference>
<dbReference type="CDD" id="cd06453">
    <property type="entry name" value="SufS_like"/>
    <property type="match status" value="1"/>
</dbReference>
<dbReference type="FunFam" id="3.40.640.10:FF:000042">
    <property type="entry name" value="Cysteine desulfurase"/>
    <property type="match status" value="1"/>
</dbReference>
<dbReference type="Gene3D" id="3.90.1150.10">
    <property type="entry name" value="Aspartate Aminotransferase, domain 1"/>
    <property type="match status" value="1"/>
</dbReference>
<dbReference type="Gene3D" id="3.40.640.10">
    <property type="entry name" value="Type I PLP-dependent aspartate aminotransferase-like (Major domain)"/>
    <property type="match status" value="1"/>
</dbReference>
<dbReference type="HAMAP" id="MF_01831">
    <property type="entry name" value="SufS_aminotrans_5"/>
    <property type="match status" value="1"/>
</dbReference>
<dbReference type="InterPro" id="IPR000192">
    <property type="entry name" value="Aminotrans_V_dom"/>
</dbReference>
<dbReference type="InterPro" id="IPR020578">
    <property type="entry name" value="Aminotrans_V_PyrdxlP_BS"/>
</dbReference>
<dbReference type="InterPro" id="IPR010970">
    <property type="entry name" value="Cys_dSase_SufS"/>
</dbReference>
<dbReference type="InterPro" id="IPR015424">
    <property type="entry name" value="PyrdxlP-dep_Trfase"/>
</dbReference>
<dbReference type="InterPro" id="IPR015421">
    <property type="entry name" value="PyrdxlP-dep_Trfase_major"/>
</dbReference>
<dbReference type="InterPro" id="IPR015422">
    <property type="entry name" value="PyrdxlP-dep_Trfase_small"/>
</dbReference>
<dbReference type="NCBIfam" id="NF006791">
    <property type="entry name" value="PRK09295.1"/>
    <property type="match status" value="1"/>
</dbReference>
<dbReference type="NCBIfam" id="TIGR01979">
    <property type="entry name" value="sufS"/>
    <property type="match status" value="1"/>
</dbReference>
<dbReference type="PANTHER" id="PTHR43586">
    <property type="entry name" value="CYSTEINE DESULFURASE"/>
    <property type="match status" value="1"/>
</dbReference>
<dbReference type="PANTHER" id="PTHR43586:SF25">
    <property type="entry name" value="CYSTEINE DESULFURASE"/>
    <property type="match status" value="1"/>
</dbReference>
<dbReference type="Pfam" id="PF00266">
    <property type="entry name" value="Aminotran_5"/>
    <property type="match status" value="1"/>
</dbReference>
<dbReference type="SUPFAM" id="SSF53383">
    <property type="entry name" value="PLP-dependent transferases"/>
    <property type="match status" value="1"/>
</dbReference>
<dbReference type="PROSITE" id="PS00595">
    <property type="entry name" value="AA_TRANSFER_CLASS_5"/>
    <property type="match status" value="1"/>
</dbReference>
<feature type="chain" id="PRO_1000188297" description="Cysteine desulfurase">
    <location>
        <begin position="1"/>
        <end position="406"/>
    </location>
</feature>
<feature type="active site" description="Cysteine persulfide intermediate" evidence="1">
    <location>
        <position position="364"/>
    </location>
</feature>
<feature type="modified residue" description="N6-(pyridoxal phosphate)lysine" evidence="1">
    <location>
        <position position="226"/>
    </location>
</feature>
<accession>B7M0N5</accession>
<sequence length="406" mass="44479">MTFSVDKVRADFPVLSREVNGLPLAYLDSAASAQKPSQVIDSEAEFYRHGYAAVHRGIHTLSAQATEKMENVRKRASLFINARSAEELVFVRGTTEGINLVANSWGNSNVRAGDNIIISQMEHHANIVPWQMLCARVGAELRVIPLNPDGTLQLETLPNLFDEKTRLLAITHVSNVLGTENPLAEMITLAHQHGAKVLVDGAQAVMHHPVDVQALDCDFYVFSGHKLYGPTGIGILYVKEALLQEMPPWEGGGSMIATVSLSEGTTWTKAPWRFEAGTPNTGGIIGLGAALEYVSALGLNNIAEYEQNLMHYALSQLESVPDLTLYGPRNRLGVIAFNLGKHHAYDVGSFLDNYGIAVRTGHHCAMPLMAYYNVPAMCRASLAMYNTHEEVDRLVTGLQRIHRLLG</sequence>
<organism>
    <name type="scientific">Escherichia coli O8 (strain IAI1)</name>
    <dbReference type="NCBI Taxonomy" id="585034"/>
    <lineage>
        <taxon>Bacteria</taxon>
        <taxon>Pseudomonadati</taxon>
        <taxon>Pseudomonadota</taxon>
        <taxon>Gammaproteobacteria</taxon>
        <taxon>Enterobacterales</taxon>
        <taxon>Enterobacteriaceae</taxon>
        <taxon>Escherichia</taxon>
    </lineage>
</organism>
<reference key="1">
    <citation type="journal article" date="2009" name="PLoS Genet.">
        <title>Organised genome dynamics in the Escherichia coli species results in highly diverse adaptive paths.</title>
        <authorList>
            <person name="Touchon M."/>
            <person name="Hoede C."/>
            <person name="Tenaillon O."/>
            <person name="Barbe V."/>
            <person name="Baeriswyl S."/>
            <person name="Bidet P."/>
            <person name="Bingen E."/>
            <person name="Bonacorsi S."/>
            <person name="Bouchier C."/>
            <person name="Bouvet O."/>
            <person name="Calteau A."/>
            <person name="Chiapello H."/>
            <person name="Clermont O."/>
            <person name="Cruveiller S."/>
            <person name="Danchin A."/>
            <person name="Diard M."/>
            <person name="Dossat C."/>
            <person name="Karoui M.E."/>
            <person name="Frapy E."/>
            <person name="Garry L."/>
            <person name="Ghigo J.M."/>
            <person name="Gilles A.M."/>
            <person name="Johnson J."/>
            <person name="Le Bouguenec C."/>
            <person name="Lescat M."/>
            <person name="Mangenot S."/>
            <person name="Martinez-Jehanne V."/>
            <person name="Matic I."/>
            <person name="Nassif X."/>
            <person name="Oztas S."/>
            <person name="Petit M.A."/>
            <person name="Pichon C."/>
            <person name="Rouy Z."/>
            <person name="Ruf C.S."/>
            <person name="Schneider D."/>
            <person name="Tourret J."/>
            <person name="Vacherie B."/>
            <person name="Vallenet D."/>
            <person name="Medigue C."/>
            <person name="Rocha E.P.C."/>
            <person name="Denamur E."/>
        </authorList>
    </citation>
    <scope>NUCLEOTIDE SEQUENCE [LARGE SCALE GENOMIC DNA]</scope>
    <source>
        <strain>IAI1</strain>
    </source>
</reference>
<proteinExistence type="inferred from homology"/>
<comment type="function">
    <text evidence="1">Cysteine desulfurases mobilize the sulfur from L-cysteine to yield L-alanine, an essential step in sulfur metabolism for biosynthesis of a variety of sulfur-containing biomolecules. Component of the suf operon, which is activated and required under specific conditions such as oxidative stress and iron limitation. Acts as a potent selenocysteine lyase in vitro, that mobilizes selenium from L-selenocysteine. Selenocysteine lyase activity is however unsure in vivo.</text>
</comment>
<comment type="catalytic activity">
    <reaction evidence="1">
        <text>(sulfur carrier)-H + L-cysteine = (sulfur carrier)-SH + L-alanine</text>
        <dbReference type="Rhea" id="RHEA:43892"/>
        <dbReference type="Rhea" id="RHEA-COMP:14737"/>
        <dbReference type="Rhea" id="RHEA-COMP:14739"/>
        <dbReference type="ChEBI" id="CHEBI:29917"/>
        <dbReference type="ChEBI" id="CHEBI:35235"/>
        <dbReference type="ChEBI" id="CHEBI:57972"/>
        <dbReference type="ChEBI" id="CHEBI:64428"/>
        <dbReference type="EC" id="2.8.1.7"/>
    </reaction>
</comment>
<comment type="catalytic activity">
    <reaction evidence="1">
        <text>L-selenocysteine + AH2 = hydrogenselenide + L-alanine + A + H(+)</text>
        <dbReference type="Rhea" id="RHEA:11632"/>
        <dbReference type="ChEBI" id="CHEBI:13193"/>
        <dbReference type="ChEBI" id="CHEBI:15378"/>
        <dbReference type="ChEBI" id="CHEBI:17499"/>
        <dbReference type="ChEBI" id="CHEBI:29317"/>
        <dbReference type="ChEBI" id="CHEBI:57843"/>
        <dbReference type="ChEBI" id="CHEBI:57972"/>
        <dbReference type="EC" id="4.4.1.16"/>
    </reaction>
</comment>
<comment type="cofactor">
    <cofactor evidence="1">
        <name>pyridoxal 5'-phosphate</name>
        <dbReference type="ChEBI" id="CHEBI:597326"/>
    </cofactor>
</comment>
<comment type="pathway">
    <text evidence="1">Cofactor biosynthesis; iron-sulfur cluster biosynthesis.</text>
</comment>
<comment type="subunit">
    <text evidence="1">Homodimer. Interacts with SufE and the SufBCD complex composed of SufB, SufC and SufD. The interaction with SufE is required to mediate the direct transfer of the sulfur atom from the S-sulfanylcysteine.</text>
</comment>
<comment type="subcellular location">
    <subcellularLocation>
        <location evidence="1">Cytoplasm</location>
    </subcellularLocation>
</comment>
<comment type="similarity">
    <text evidence="1">Belongs to the class-V pyridoxal-phosphate-dependent aminotransferase family. Csd subfamily.</text>
</comment>
<evidence type="ECO:0000255" key="1">
    <source>
        <dbReference type="HAMAP-Rule" id="MF_01831"/>
    </source>
</evidence>
<keyword id="KW-0963">Cytoplasm</keyword>
<keyword id="KW-0456">Lyase</keyword>
<keyword id="KW-0663">Pyridoxal phosphate</keyword>
<keyword id="KW-0808">Transferase</keyword>
<name>SUFS_ECO8A</name>